<name>PLAP_ECO57</name>
<gene>
    <name type="primary">plaP</name>
    <name type="ordered locus">Z3176</name>
    <name type="ordered locus">ECs2816</name>
</gene>
<organism>
    <name type="scientific">Escherichia coli O157:H7</name>
    <dbReference type="NCBI Taxonomy" id="83334"/>
    <lineage>
        <taxon>Bacteria</taxon>
        <taxon>Pseudomonadati</taxon>
        <taxon>Pseudomonadota</taxon>
        <taxon>Gammaproteobacteria</taxon>
        <taxon>Enterobacterales</taxon>
        <taxon>Enterobacteriaceae</taxon>
        <taxon>Escherichia</taxon>
    </lineage>
</organism>
<evidence type="ECO:0000250" key="1">
    <source>
        <dbReference type="UniProtKB" id="P0AA47"/>
    </source>
</evidence>
<evidence type="ECO:0000255" key="2"/>
<evidence type="ECO:0000305" key="3"/>
<accession>P0AA48</accession>
<accession>P33016</accession>
<feature type="chain" id="PRO_0000054216" description="Low-affinity putrescine importer PlaP">
    <location>
        <begin position="1"/>
        <end position="452"/>
    </location>
</feature>
<feature type="topological domain" description="Cytoplasmic" evidence="2">
    <location>
        <begin position="1"/>
        <end position="16"/>
    </location>
</feature>
<feature type="transmembrane region" description="Helical" evidence="2">
    <location>
        <begin position="17"/>
        <end position="37"/>
    </location>
</feature>
<feature type="topological domain" description="Periplasmic" evidence="2">
    <location>
        <begin position="38"/>
        <end position="48"/>
    </location>
</feature>
<feature type="transmembrane region" description="Helical" evidence="2">
    <location>
        <begin position="49"/>
        <end position="69"/>
    </location>
</feature>
<feature type="topological domain" description="Cytoplasmic" evidence="2">
    <location>
        <begin position="70"/>
        <end position="95"/>
    </location>
</feature>
<feature type="transmembrane region" description="Helical" evidence="2">
    <location>
        <begin position="96"/>
        <end position="116"/>
    </location>
</feature>
<feature type="topological domain" description="Periplasmic" evidence="2">
    <location>
        <begin position="117"/>
        <end position="123"/>
    </location>
</feature>
<feature type="transmembrane region" description="Helical" evidence="2">
    <location>
        <begin position="124"/>
        <end position="144"/>
    </location>
</feature>
<feature type="topological domain" description="Cytoplasmic" evidence="2">
    <location>
        <begin position="145"/>
        <end position="158"/>
    </location>
</feature>
<feature type="transmembrane region" description="Helical" evidence="2">
    <location>
        <begin position="159"/>
        <end position="179"/>
    </location>
</feature>
<feature type="topological domain" description="Periplasmic" evidence="2">
    <location>
        <begin position="180"/>
        <end position="199"/>
    </location>
</feature>
<feature type="transmembrane region" description="Helical" evidence="2">
    <location>
        <begin position="200"/>
        <end position="220"/>
    </location>
</feature>
<feature type="topological domain" description="Cytoplasmic" evidence="2">
    <location>
        <begin position="221"/>
        <end position="237"/>
    </location>
</feature>
<feature type="transmembrane region" description="Helical" evidence="2">
    <location>
        <begin position="238"/>
        <end position="258"/>
    </location>
</feature>
<feature type="topological domain" description="Periplasmic" evidence="2">
    <location>
        <begin position="259"/>
        <end position="283"/>
    </location>
</feature>
<feature type="transmembrane region" description="Helical" evidence="2">
    <location>
        <begin position="284"/>
        <end position="304"/>
    </location>
</feature>
<feature type="topological domain" description="Cytoplasmic" evidence="2">
    <location>
        <begin position="305"/>
        <end position="339"/>
    </location>
</feature>
<feature type="transmembrane region" description="Helical" evidence="2">
    <location>
        <begin position="340"/>
        <end position="360"/>
    </location>
</feature>
<feature type="transmembrane region" description="Helical" evidence="2">
    <location>
        <begin position="361"/>
        <end position="381"/>
    </location>
</feature>
<feature type="topological domain" description="Cytoplasmic" evidence="2">
    <location>
        <begin position="382"/>
        <end position="394"/>
    </location>
</feature>
<feature type="transmembrane region" description="Helical" evidence="2">
    <location>
        <begin position="395"/>
        <end position="415"/>
    </location>
</feature>
<feature type="topological domain" description="Periplasmic" evidence="2">
    <location>
        <begin position="416"/>
        <end position="417"/>
    </location>
</feature>
<feature type="transmembrane region" description="Helical" evidence="2">
    <location>
        <begin position="418"/>
        <end position="438"/>
    </location>
</feature>
<feature type="topological domain" description="Cytoplasmic" evidence="2">
    <location>
        <begin position="439"/>
        <end position="452"/>
    </location>
</feature>
<comment type="function">
    <text evidence="1">Putrescine importer.</text>
</comment>
<comment type="catalytic activity">
    <reaction evidence="1">
        <text>putrescine(in) + H(+)(in) = putrescine(out) + H(+)(out)</text>
        <dbReference type="Rhea" id="RHEA:28891"/>
        <dbReference type="ChEBI" id="CHEBI:15378"/>
        <dbReference type="ChEBI" id="CHEBI:326268"/>
    </reaction>
    <physiologicalReaction direction="right-to-left" evidence="1">
        <dbReference type="Rhea" id="RHEA:28893"/>
    </physiologicalReaction>
</comment>
<comment type="subcellular location">
    <subcellularLocation>
        <location evidence="1">Cell inner membrane</location>
        <topology evidence="2">Multi-pass membrane protein</topology>
    </subcellularLocation>
</comment>
<comment type="similarity">
    <text evidence="3">Belongs to the amino acid-polyamine-organocation (APC) superfamily.</text>
</comment>
<comment type="sequence caution" evidence="3">
    <conflict type="erroneous initiation">
        <sequence resource="EMBL-CDS" id="AAG57073"/>
    </conflict>
    <text>Extended N-terminus.</text>
</comment>
<reference key="1">
    <citation type="journal article" date="2001" name="Nature">
        <title>Genome sequence of enterohaemorrhagic Escherichia coli O157:H7.</title>
        <authorList>
            <person name="Perna N.T."/>
            <person name="Plunkett G. III"/>
            <person name="Burland V."/>
            <person name="Mau B."/>
            <person name="Glasner J.D."/>
            <person name="Rose D.J."/>
            <person name="Mayhew G.F."/>
            <person name="Evans P.S."/>
            <person name="Gregor J."/>
            <person name="Kirkpatrick H.A."/>
            <person name="Posfai G."/>
            <person name="Hackett J."/>
            <person name="Klink S."/>
            <person name="Boutin A."/>
            <person name="Shao Y."/>
            <person name="Miller L."/>
            <person name="Grotbeck E.J."/>
            <person name="Davis N.W."/>
            <person name="Lim A."/>
            <person name="Dimalanta E.T."/>
            <person name="Potamousis K."/>
            <person name="Apodaca J."/>
            <person name="Anantharaman T.S."/>
            <person name="Lin J."/>
            <person name="Yen G."/>
            <person name="Schwartz D.C."/>
            <person name="Welch R.A."/>
            <person name="Blattner F.R."/>
        </authorList>
    </citation>
    <scope>NUCLEOTIDE SEQUENCE [LARGE SCALE GENOMIC DNA]</scope>
    <source>
        <strain>O157:H7 / EDL933 / ATCC 700927 / EHEC</strain>
    </source>
</reference>
<reference key="2">
    <citation type="journal article" date="2001" name="DNA Res.">
        <title>Complete genome sequence of enterohemorrhagic Escherichia coli O157:H7 and genomic comparison with a laboratory strain K-12.</title>
        <authorList>
            <person name="Hayashi T."/>
            <person name="Makino K."/>
            <person name="Ohnishi M."/>
            <person name="Kurokawa K."/>
            <person name="Ishii K."/>
            <person name="Yokoyama K."/>
            <person name="Han C.-G."/>
            <person name="Ohtsubo E."/>
            <person name="Nakayama K."/>
            <person name="Murata T."/>
            <person name="Tanaka M."/>
            <person name="Tobe T."/>
            <person name="Iida T."/>
            <person name="Takami H."/>
            <person name="Honda T."/>
            <person name="Sasakawa C."/>
            <person name="Ogasawara N."/>
            <person name="Yasunaga T."/>
            <person name="Kuhara S."/>
            <person name="Shiba T."/>
            <person name="Hattori M."/>
            <person name="Shinagawa H."/>
        </authorList>
    </citation>
    <scope>NUCLEOTIDE SEQUENCE [LARGE SCALE GENOMIC DNA]</scope>
    <source>
        <strain>O157:H7 / Sakai / RIMD 0509952 / EHEC</strain>
    </source>
</reference>
<proteinExistence type="inferred from homology"/>
<keyword id="KW-0029">Amino-acid transport</keyword>
<keyword id="KW-0997">Cell inner membrane</keyword>
<keyword id="KW-1003">Cell membrane</keyword>
<keyword id="KW-0472">Membrane</keyword>
<keyword id="KW-1185">Reference proteome</keyword>
<keyword id="KW-0769">Symport</keyword>
<keyword id="KW-0812">Transmembrane</keyword>
<keyword id="KW-1133">Transmembrane helix</keyword>
<keyword id="KW-0813">Transport</keyword>
<sequence length="452" mass="49538">MSHNVTPNTSRVELRKTLTLVPVVMMGLAYMQPMTLFDTFGIVSGLTDGHVPTAYAFALIAILFTALSYGKLVRRYPSAGSAYTYAQKSISPTVGFMVGWSSLLDYLFAPMINILLAKIYFEALVPSIPSWMFVVALVAFMTAFNLRSLKSVANFNTVIVVLQVVLIAVILGMVVYGVFEGEGAGTLASTRPFWSGDAHVIPMITGATILCFSFTGFDGISNLSEETKDAERVIPRAIFLTALIGGMIFIFATYFLQLYFPDISRFKDPDASQPEIMLYVAGKAFQVGALIFSTITVLASGMAAHAGVARLMYVMGRDGVFPKSFFGYVHPKWRTPAMNIILVGAIALLAINFDLVMATALINFGALVAFTFVNLSVISQFWIREKRNKTLKDHFQYLFLPMCGALTVGALWVNLEESSMVLGLIWAAIGLIYLACVTKSFRNPVPQYEDVA</sequence>
<dbReference type="EMBL" id="AE005174">
    <property type="protein sequence ID" value="AAG57073.1"/>
    <property type="status" value="ALT_INIT"/>
    <property type="molecule type" value="Genomic_DNA"/>
</dbReference>
<dbReference type="EMBL" id="BA000007">
    <property type="protein sequence ID" value="BAB36239.2"/>
    <property type="molecule type" value="Genomic_DNA"/>
</dbReference>
<dbReference type="RefSeq" id="NP_310843.2">
    <property type="nucleotide sequence ID" value="NC_002695.1"/>
</dbReference>
<dbReference type="RefSeq" id="WP_000019197.1">
    <property type="nucleotide sequence ID" value="NZ_VOAI01000013.1"/>
</dbReference>
<dbReference type="SMR" id="P0AA48"/>
<dbReference type="STRING" id="155864.Z3176"/>
<dbReference type="GeneID" id="912852"/>
<dbReference type="GeneID" id="93775161"/>
<dbReference type="KEGG" id="ece:Z3176"/>
<dbReference type="KEGG" id="ecs:ECs_2816"/>
<dbReference type="PATRIC" id="fig|386585.9.peg.2952"/>
<dbReference type="eggNOG" id="COG0531">
    <property type="taxonomic scope" value="Bacteria"/>
</dbReference>
<dbReference type="HOGENOM" id="CLU_007946_6_0_6"/>
<dbReference type="OMA" id="WILGWDL"/>
<dbReference type="Proteomes" id="UP000000558">
    <property type="component" value="Chromosome"/>
</dbReference>
<dbReference type="Proteomes" id="UP000002519">
    <property type="component" value="Chromosome"/>
</dbReference>
<dbReference type="GO" id="GO:0005886">
    <property type="term" value="C:plasma membrane"/>
    <property type="evidence" value="ECO:0007669"/>
    <property type="project" value="UniProtKB-SubCell"/>
</dbReference>
<dbReference type="GO" id="GO:0015293">
    <property type="term" value="F:symporter activity"/>
    <property type="evidence" value="ECO:0007669"/>
    <property type="project" value="UniProtKB-KW"/>
</dbReference>
<dbReference type="GO" id="GO:0006865">
    <property type="term" value="P:amino acid transport"/>
    <property type="evidence" value="ECO:0007669"/>
    <property type="project" value="UniProtKB-KW"/>
</dbReference>
<dbReference type="FunFam" id="1.20.1740.10:FF:000007">
    <property type="entry name" value="APC family permease"/>
    <property type="match status" value="1"/>
</dbReference>
<dbReference type="Gene3D" id="1.20.1740.10">
    <property type="entry name" value="Amino acid/polyamine transporter I"/>
    <property type="match status" value="1"/>
</dbReference>
<dbReference type="InterPro" id="IPR004841">
    <property type="entry name" value="AA-permease/SLC12A_dom"/>
</dbReference>
<dbReference type="InterPro" id="IPR050367">
    <property type="entry name" value="APC_superfamily"/>
</dbReference>
<dbReference type="PANTHER" id="PTHR42770">
    <property type="entry name" value="AMINO ACID TRANSPORTER-RELATED"/>
    <property type="match status" value="1"/>
</dbReference>
<dbReference type="PANTHER" id="PTHR42770:SF1">
    <property type="entry name" value="LOW-AFFINITY PUTRESCINE IMPORTER PLAP"/>
    <property type="match status" value="1"/>
</dbReference>
<dbReference type="Pfam" id="PF00324">
    <property type="entry name" value="AA_permease"/>
    <property type="match status" value="1"/>
</dbReference>
<dbReference type="PIRSF" id="PIRSF006060">
    <property type="entry name" value="AA_transporter"/>
    <property type="match status" value="1"/>
</dbReference>
<protein>
    <recommendedName>
        <fullName evidence="1">Low-affinity putrescine importer PlaP</fullName>
    </recommendedName>
</protein>